<proteinExistence type="predicted"/>
<organism>
    <name type="scientific">Invertebrate iridescent virus 6</name>
    <name type="common">IIV-6</name>
    <name type="synonym">Chilo iridescent virus</name>
    <dbReference type="NCBI Taxonomy" id="176652"/>
    <lineage>
        <taxon>Viruses</taxon>
        <taxon>Varidnaviria</taxon>
        <taxon>Bamfordvirae</taxon>
        <taxon>Nucleocytoviricota</taxon>
        <taxon>Megaviricetes</taxon>
        <taxon>Pimascovirales</taxon>
        <taxon>Iridoviridae</taxon>
        <taxon>Betairidovirinae</taxon>
        <taxon>Iridovirus</taxon>
    </lineage>
</organism>
<name>200R_IIV6</name>
<accession>Q91FX0</accession>
<gene>
    <name type="ORF">IIV6-200R</name>
</gene>
<sequence length="61" mass="7374">MMKDLFTFVMDKNISIDINSDWFKELWYPLSKKCRSNTLFDFKDEVKAPPPPERAVKVWLY</sequence>
<dbReference type="EMBL" id="AF303741">
    <property type="protein sequence ID" value="AAK82062.1"/>
    <property type="molecule type" value="Genomic_DNA"/>
</dbReference>
<dbReference type="RefSeq" id="NP_149663.1">
    <property type="nucleotide sequence ID" value="NC_003038.1"/>
</dbReference>
<dbReference type="KEGG" id="vg:1733071"/>
<dbReference type="OrthoDB" id="89at10486"/>
<dbReference type="Proteomes" id="UP000001359">
    <property type="component" value="Genome"/>
</dbReference>
<reference key="1">
    <citation type="journal article" date="2001" name="Virology">
        <title>Analysis of the first complete DNA sequence of an invertebrate iridovirus: coding strategy of the genome of Chilo iridescent virus.</title>
        <authorList>
            <person name="Jakob N.J."/>
            <person name="Mueller K."/>
            <person name="Bahr U."/>
            <person name="Darai G."/>
        </authorList>
    </citation>
    <scope>NUCLEOTIDE SEQUENCE [LARGE SCALE GENOMIC DNA]</scope>
</reference>
<reference key="2">
    <citation type="journal article" date="2007" name="Virol. J.">
        <title>Comparative genomic analysis of the family Iridoviridae: re-annotating and defining the core set of iridovirus genes.</title>
        <authorList>
            <person name="Eaton H.E."/>
            <person name="Metcalf J."/>
            <person name="Penny E."/>
            <person name="Tcherepanov V."/>
            <person name="Upton C."/>
            <person name="Brunetti C.R."/>
        </authorList>
    </citation>
    <scope>GENOME REANNOTATION</scope>
</reference>
<keyword id="KW-1185">Reference proteome</keyword>
<feature type="chain" id="PRO_0000377915" description="Putative MSV199 domain-containing protein 200R">
    <location>
        <begin position="1"/>
        <end position="61"/>
    </location>
</feature>
<organismHost>
    <name type="scientific">Acheta domesticus</name>
    <name type="common">House cricket</name>
    <dbReference type="NCBI Taxonomy" id="6997"/>
</organismHost>
<organismHost>
    <name type="scientific">Chilo suppressalis</name>
    <name type="common">Asiatic rice borer moth</name>
    <dbReference type="NCBI Taxonomy" id="168631"/>
</organismHost>
<organismHost>
    <name type="scientific">Gryllus bimaculatus</name>
    <name type="common">Two-spotted cricket</name>
    <dbReference type="NCBI Taxonomy" id="6999"/>
</organismHost>
<organismHost>
    <name type="scientific">Gryllus campestris</name>
    <dbReference type="NCBI Taxonomy" id="58607"/>
</organismHost>
<organismHost>
    <name type="scientific">Spodoptera frugiperda</name>
    <name type="common">Fall armyworm</name>
    <dbReference type="NCBI Taxonomy" id="7108"/>
</organismHost>
<protein>
    <recommendedName>
        <fullName>Putative MSV199 domain-containing protein 200R</fullName>
    </recommendedName>
</protein>